<comment type="function">
    <text evidence="1">Catalyzes the attachment of glutamate to tRNA(Glu) in a two-step reaction: glutamate is first activated by ATP to form Glu-AMP and then transferred to the acceptor end of tRNA(Glu).</text>
</comment>
<comment type="catalytic activity">
    <reaction evidence="1">
        <text>tRNA(Glu) + L-glutamate + ATP = L-glutamyl-tRNA(Glu) + AMP + diphosphate</text>
        <dbReference type="Rhea" id="RHEA:23540"/>
        <dbReference type="Rhea" id="RHEA-COMP:9663"/>
        <dbReference type="Rhea" id="RHEA-COMP:9680"/>
        <dbReference type="ChEBI" id="CHEBI:29985"/>
        <dbReference type="ChEBI" id="CHEBI:30616"/>
        <dbReference type="ChEBI" id="CHEBI:33019"/>
        <dbReference type="ChEBI" id="CHEBI:78442"/>
        <dbReference type="ChEBI" id="CHEBI:78520"/>
        <dbReference type="ChEBI" id="CHEBI:456215"/>
        <dbReference type="EC" id="6.1.1.17"/>
    </reaction>
</comment>
<comment type="subunit">
    <text evidence="1">Monomer.</text>
</comment>
<comment type="subcellular location">
    <subcellularLocation>
        <location evidence="1">Cytoplasm</location>
    </subcellularLocation>
</comment>
<comment type="similarity">
    <text evidence="1">Belongs to the class-I aminoacyl-tRNA synthetase family. Glutamate--tRNA ligase type 1 subfamily.</text>
</comment>
<name>SYE1_METS4</name>
<organism>
    <name type="scientific">Methylobacterium sp. (strain 4-46)</name>
    <dbReference type="NCBI Taxonomy" id="426117"/>
    <lineage>
        <taxon>Bacteria</taxon>
        <taxon>Pseudomonadati</taxon>
        <taxon>Pseudomonadota</taxon>
        <taxon>Alphaproteobacteria</taxon>
        <taxon>Hyphomicrobiales</taxon>
        <taxon>Methylobacteriaceae</taxon>
        <taxon>Methylobacterium</taxon>
    </lineage>
</organism>
<feature type="chain" id="PRO_0000367713" description="Glutamate--tRNA ligase 1">
    <location>
        <begin position="1"/>
        <end position="474"/>
    </location>
</feature>
<feature type="short sequence motif" description="'HIGH' region" evidence="1">
    <location>
        <begin position="10"/>
        <end position="20"/>
    </location>
</feature>
<feature type="short sequence motif" description="'KMSKS' region" evidence="1">
    <location>
        <begin position="239"/>
        <end position="243"/>
    </location>
</feature>
<feature type="binding site" evidence="1">
    <location>
        <position position="242"/>
    </location>
    <ligand>
        <name>ATP</name>
        <dbReference type="ChEBI" id="CHEBI:30616"/>
    </ligand>
</feature>
<keyword id="KW-0030">Aminoacyl-tRNA synthetase</keyword>
<keyword id="KW-0067">ATP-binding</keyword>
<keyword id="KW-0963">Cytoplasm</keyword>
<keyword id="KW-0436">Ligase</keyword>
<keyword id="KW-0547">Nucleotide-binding</keyword>
<keyword id="KW-0648">Protein biosynthesis</keyword>
<proteinExistence type="inferred from homology"/>
<sequence length="474" mass="52159">MSSVVTRFAPSPTGFLHIGGGRTALFNWLYARKHGGRMLLRIEDTDRERSTEAAIEAILDGLSWLGLDWDGDVIYQFARAARHREVAEGLLAAGRAYRCYASPEELTEMREAARREGRPLRYDGRWRDRNPSEAPPGVRPVIRLRAPVEGETVVEDEVQGRVVWQNKDLDDLVLLRSDGTPTYMLAVVVDDHDMGVTHVIRGDDHLTNAARQTQIYHALGWTVPSMSHIPLIHGPDGAKLSKRHGALGVDAYRGLGYLPAALRNYLVRLGWSHGDQEVFSTEEMVAAFDLKQIGRSPARFDFAKLENLNGQYIRATSDADLVAAIEAILPSQGPARGLPARFDDALRARFLAAMPGLKERAKTLIELLDSAYYLYAPRPLALDERAEGLLGNGGRERLAGVLPRLEALPDWSAASTEQAVRDFAEAAAVKLGHVAQPLRAALTGRATSPGLFDVMAVLGREESLGRLRDQARAA</sequence>
<evidence type="ECO:0000255" key="1">
    <source>
        <dbReference type="HAMAP-Rule" id="MF_00022"/>
    </source>
</evidence>
<dbReference type="EC" id="6.1.1.17" evidence="1"/>
<dbReference type="EMBL" id="CP000943">
    <property type="protein sequence ID" value="ACA15208.1"/>
    <property type="molecule type" value="Genomic_DNA"/>
</dbReference>
<dbReference type="SMR" id="B0UQ09"/>
<dbReference type="STRING" id="426117.M446_0647"/>
<dbReference type="KEGG" id="met:M446_0647"/>
<dbReference type="eggNOG" id="COG0008">
    <property type="taxonomic scope" value="Bacteria"/>
</dbReference>
<dbReference type="HOGENOM" id="CLU_015768_6_3_5"/>
<dbReference type="GO" id="GO:0005829">
    <property type="term" value="C:cytosol"/>
    <property type="evidence" value="ECO:0007669"/>
    <property type="project" value="TreeGrafter"/>
</dbReference>
<dbReference type="GO" id="GO:0005524">
    <property type="term" value="F:ATP binding"/>
    <property type="evidence" value="ECO:0007669"/>
    <property type="project" value="UniProtKB-UniRule"/>
</dbReference>
<dbReference type="GO" id="GO:0004818">
    <property type="term" value="F:glutamate-tRNA ligase activity"/>
    <property type="evidence" value="ECO:0007669"/>
    <property type="project" value="UniProtKB-UniRule"/>
</dbReference>
<dbReference type="GO" id="GO:0000049">
    <property type="term" value="F:tRNA binding"/>
    <property type="evidence" value="ECO:0007669"/>
    <property type="project" value="InterPro"/>
</dbReference>
<dbReference type="GO" id="GO:0008270">
    <property type="term" value="F:zinc ion binding"/>
    <property type="evidence" value="ECO:0007669"/>
    <property type="project" value="InterPro"/>
</dbReference>
<dbReference type="GO" id="GO:0006424">
    <property type="term" value="P:glutamyl-tRNA aminoacylation"/>
    <property type="evidence" value="ECO:0007669"/>
    <property type="project" value="UniProtKB-UniRule"/>
</dbReference>
<dbReference type="CDD" id="cd00808">
    <property type="entry name" value="GluRS_core"/>
    <property type="match status" value="1"/>
</dbReference>
<dbReference type="FunFam" id="3.40.50.620:FF:000007">
    <property type="entry name" value="Glutamate--tRNA ligase"/>
    <property type="match status" value="1"/>
</dbReference>
<dbReference type="Gene3D" id="1.10.10.350">
    <property type="match status" value="1"/>
</dbReference>
<dbReference type="Gene3D" id="3.40.50.620">
    <property type="entry name" value="HUPs"/>
    <property type="match status" value="1"/>
</dbReference>
<dbReference type="HAMAP" id="MF_00022">
    <property type="entry name" value="Glu_tRNA_synth_type1"/>
    <property type="match status" value="1"/>
</dbReference>
<dbReference type="InterPro" id="IPR045462">
    <property type="entry name" value="aa-tRNA-synth_I_cd-bd"/>
</dbReference>
<dbReference type="InterPro" id="IPR020751">
    <property type="entry name" value="aa-tRNA-synth_I_codon-bd_sub2"/>
</dbReference>
<dbReference type="InterPro" id="IPR001412">
    <property type="entry name" value="aa-tRNA-synth_I_CS"/>
</dbReference>
<dbReference type="InterPro" id="IPR008925">
    <property type="entry name" value="aa_tRNA-synth_I_cd-bd_sf"/>
</dbReference>
<dbReference type="InterPro" id="IPR004527">
    <property type="entry name" value="Glu-tRNA-ligase_bac/mito"/>
</dbReference>
<dbReference type="InterPro" id="IPR000924">
    <property type="entry name" value="Glu/Gln-tRNA-synth"/>
</dbReference>
<dbReference type="InterPro" id="IPR020058">
    <property type="entry name" value="Glu/Gln-tRNA-synth_Ib_cat-dom"/>
</dbReference>
<dbReference type="InterPro" id="IPR049940">
    <property type="entry name" value="GluQ/Sye"/>
</dbReference>
<dbReference type="InterPro" id="IPR033910">
    <property type="entry name" value="GluRS_core"/>
</dbReference>
<dbReference type="InterPro" id="IPR014729">
    <property type="entry name" value="Rossmann-like_a/b/a_fold"/>
</dbReference>
<dbReference type="NCBIfam" id="TIGR00464">
    <property type="entry name" value="gltX_bact"/>
    <property type="match status" value="1"/>
</dbReference>
<dbReference type="PANTHER" id="PTHR43311">
    <property type="entry name" value="GLUTAMATE--TRNA LIGASE"/>
    <property type="match status" value="1"/>
</dbReference>
<dbReference type="PANTHER" id="PTHR43311:SF2">
    <property type="entry name" value="GLUTAMATE--TRNA LIGASE, MITOCHONDRIAL-RELATED"/>
    <property type="match status" value="1"/>
</dbReference>
<dbReference type="Pfam" id="PF19269">
    <property type="entry name" value="Anticodon_2"/>
    <property type="match status" value="1"/>
</dbReference>
<dbReference type="Pfam" id="PF00749">
    <property type="entry name" value="tRNA-synt_1c"/>
    <property type="match status" value="1"/>
</dbReference>
<dbReference type="PRINTS" id="PR00987">
    <property type="entry name" value="TRNASYNTHGLU"/>
</dbReference>
<dbReference type="SUPFAM" id="SSF48163">
    <property type="entry name" value="An anticodon-binding domain of class I aminoacyl-tRNA synthetases"/>
    <property type="match status" value="1"/>
</dbReference>
<dbReference type="SUPFAM" id="SSF52374">
    <property type="entry name" value="Nucleotidylyl transferase"/>
    <property type="match status" value="1"/>
</dbReference>
<dbReference type="PROSITE" id="PS00178">
    <property type="entry name" value="AA_TRNA_LIGASE_I"/>
    <property type="match status" value="1"/>
</dbReference>
<gene>
    <name evidence="1" type="primary">gltX1</name>
    <name type="ordered locus">M446_0647</name>
</gene>
<accession>B0UQ09</accession>
<reference key="1">
    <citation type="submission" date="2008-02" db="EMBL/GenBank/DDBJ databases">
        <title>Complete sequence of chromosome of Methylobacterium sp. 4-46.</title>
        <authorList>
            <consortium name="US DOE Joint Genome Institute"/>
            <person name="Copeland A."/>
            <person name="Lucas S."/>
            <person name="Lapidus A."/>
            <person name="Glavina del Rio T."/>
            <person name="Dalin E."/>
            <person name="Tice H."/>
            <person name="Bruce D."/>
            <person name="Goodwin L."/>
            <person name="Pitluck S."/>
            <person name="Chertkov O."/>
            <person name="Brettin T."/>
            <person name="Detter J.C."/>
            <person name="Han C."/>
            <person name="Kuske C.R."/>
            <person name="Schmutz J."/>
            <person name="Larimer F."/>
            <person name="Land M."/>
            <person name="Hauser L."/>
            <person name="Kyrpides N."/>
            <person name="Ivanova N."/>
            <person name="Marx C.J."/>
            <person name="Richardson P."/>
        </authorList>
    </citation>
    <scope>NUCLEOTIDE SEQUENCE [LARGE SCALE GENOMIC DNA]</scope>
    <source>
        <strain>4-46</strain>
    </source>
</reference>
<protein>
    <recommendedName>
        <fullName evidence="1">Glutamate--tRNA ligase 1</fullName>
        <ecNumber evidence="1">6.1.1.17</ecNumber>
    </recommendedName>
    <alternativeName>
        <fullName evidence="1">Glutamyl-tRNA synthetase 1</fullName>
        <shortName evidence="1">GluRS 1</shortName>
    </alternativeName>
</protein>